<name>MURA_PSEPK</name>
<comment type="function">
    <text evidence="1">Cell wall formation. Adds enolpyruvyl to UDP-N-acetylglucosamine.</text>
</comment>
<comment type="catalytic activity">
    <reaction evidence="1">
        <text>phosphoenolpyruvate + UDP-N-acetyl-alpha-D-glucosamine = UDP-N-acetyl-3-O-(1-carboxyvinyl)-alpha-D-glucosamine + phosphate</text>
        <dbReference type="Rhea" id="RHEA:18681"/>
        <dbReference type="ChEBI" id="CHEBI:43474"/>
        <dbReference type="ChEBI" id="CHEBI:57705"/>
        <dbReference type="ChEBI" id="CHEBI:58702"/>
        <dbReference type="ChEBI" id="CHEBI:68483"/>
        <dbReference type="EC" id="2.5.1.7"/>
    </reaction>
</comment>
<comment type="pathway">
    <text evidence="1">Cell wall biogenesis; peptidoglycan biosynthesis.</text>
</comment>
<comment type="subcellular location">
    <subcellularLocation>
        <location evidence="1">Cytoplasm</location>
    </subcellularLocation>
</comment>
<comment type="similarity">
    <text evidence="1">Belongs to the EPSP synthase family. MurA subfamily.</text>
</comment>
<accession>Q88P88</accession>
<protein>
    <recommendedName>
        <fullName evidence="1">UDP-N-acetylglucosamine 1-carboxyvinyltransferase</fullName>
        <ecNumber evidence="1">2.5.1.7</ecNumber>
    </recommendedName>
    <alternativeName>
        <fullName evidence="1">Enoylpyruvate transferase</fullName>
    </alternativeName>
    <alternativeName>
        <fullName evidence="1">UDP-N-acetylglucosamine enolpyruvyl transferase</fullName>
        <shortName evidence="1">EPT</shortName>
    </alternativeName>
</protein>
<dbReference type="EC" id="2.5.1.7" evidence="1"/>
<dbReference type="EMBL" id="AE015451">
    <property type="protein sequence ID" value="AAN66589.1"/>
    <property type="molecule type" value="Genomic_DNA"/>
</dbReference>
<dbReference type="RefSeq" id="NP_743125.1">
    <property type="nucleotide sequence ID" value="NC_002947.4"/>
</dbReference>
<dbReference type="RefSeq" id="WP_003255119.1">
    <property type="nucleotide sequence ID" value="NZ_CP169744.1"/>
</dbReference>
<dbReference type="PDB" id="6CN1">
    <property type="method" value="X-ray"/>
    <property type="resolution" value="2.75 A"/>
    <property type="chains" value="A/B/C/D/E/F/G/H=1-421"/>
</dbReference>
<dbReference type="PDBsum" id="6CN1"/>
<dbReference type="SMR" id="Q88P88"/>
<dbReference type="STRING" id="160488.PP_0964"/>
<dbReference type="PaxDb" id="160488-PP_0964"/>
<dbReference type="GeneID" id="83678317"/>
<dbReference type="KEGG" id="ppu:PP_0964"/>
<dbReference type="PATRIC" id="fig|160488.4.peg.1026"/>
<dbReference type="eggNOG" id="COG0766">
    <property type="taxonomic scope" value="Bacteria"/>
</dbReference>
<dbReference type="HOGENOM" id="CLU_027387_0_0_6"/>
<dbReference type="OrthoDB" id="9803760at2"/>
<dbReference type="PhylomeDB" id="Q88P88"/>
<dbReference type="BioCyc" id="PPUT160488:G1G01-1038-MONOMER"/>
<dbReference type="UniPathway" id="UPA00219"/>
<dbReference type="Proteomes" id="UP000000556">
    <property type="component" value="Chromosome"/>
</dbReference>
<dbReference type="GO" id="GO:0005737">
    <property type="term" value="C:cytoplasm"/>
    <property type="evidence" value="ECO:0007669"/>
    <property type="project" value="UniProtKB-SubCell"/>
</dbReference>
<dbReference type="GO" id="GO:0008760">
    <property type="term" value="F:UDP-N-acetylglucosamine 1-carboxyvinyltransferase activity"/>
    <property type="evidence" value="ECO:0007669"/>
    <property type="project" value="UniProtKB-UniRule"/>
</dbReference>
<dbReference type="GO" id="GO:0051301">
    <property type="term" value="P:cell division"/>
    <property type="evidence" value="ECO:0007669"/>
    <property type="project" value="UniProtKB-KW"/>
</dbReference>
<dbReference type="GO" id="GO:0071555">
    <property type="term" value="P:cell wall organization"/>
    <property type="evidence" value="ECO:0007669"/>
    <property type="project" value="UniProtKB-KW"/>
</dbReference>
<dbReference type="GO" id="GO:0009252">
    <property type="term" value="P:peptidoglycan biosynthetic process"/>
    <property type="evidence" value="ECO:0007669"/>
    <property type="project" value="UniProtKB-UniRule"/>
</dbReference>
<dbReference type="GO" id="GO:0008360">
    <property type="term" value="P:regulation of cell shape"/>
    <property type="evidence" value="ECO:0007669"/>
    <property type="project" value="UniProtKB-KW"/>
</dbReference>
<dbReference type="GO" id="GO:0019277">
    <property type="term" value="P:UDP-N-acetylgalactosamine biosynthetic process"/>
    <property type="evidence" value="ECO:0007669"/>
    <property type="project" value="InterPro"/>
</dbReference>
<dbReference type="CDD" id="cd01555">
    <property type="entry name" value="UdpNAET"/>
    <property type="match status" value="1"/>
</dbReference>
<dbReference type="FunFam" id="3.65.10.10:FF:000002">
    <property type="entry name" value="UDP-N-acetylglucosamine 1-carboxyvinyltransferase"/>
    <property type="match status" value="1"/>
</dbReference>
<dbReference type="Gene3D" id="3.65.10.10">
    <property type="entry name" value="Enolpyruvate transferase domain"/>
    <property type="match status" value="2"/>
</dbReference>
<dbReference type="HAMAP" id="MF_00111">
    <property type="entry name" value="MurA"/>
    <property type="match status" value="1"/>
</dbReference>
<dbReference type="InterPro" id="IPR001986">
    <property type="entry name" value="Enolpyruvate_Tfrase_dom"/>
</dbReference>
<dbReference type="InterPro" id="IPR036968">
    <property type="entry name" value="Enolpyruvate_Tfrase_sf"/>
</dbReference>
<dbReference type="InterPro" id="IPR050068">
    <property type="entry name" value="MurA_subfamily"/>
</dbReference>
<dbReference type="InterPro" id="IPR013792">
    <property type="entry name" value="RNA3'P_cycl/enolpyr_Trfase_a/b"/>
</dbReference>
<dbReference type="InterPro" id="IPR005750">
    <property type="entry name" value="UDP_GlcNAc_COvinyl_MurA"/>
</dbReference>
<dbReference type="NCBIfam" id="TIGR01072">
    <property type="entry name" value="murA"/>
    <property type="match status" value="1"/>
</dbReference>
<dbReference type="NCBIfam" id="NF006873">
    <property type="entry name" value="PRK09369.1"/>
    <property type="match status" value="1"/>
</dbReference>
<dbReference type="PANTHER" id="PTHR43783">
    <property type="entry name" value="UDP-N-ACETYLGLUCOSAMINE 1-CARBOXYVINYLTRANSFERASE"/>
    <property type="match status" value="1"/>
</dbReference>
<dbReference type="PANTHER" id="PTHR43783:SF1">
    <property type="entry name" value="UDP-N-ACETYLGLUCOSAMINE 1-CARBOXYVINYLTRANSFERASE"/>
    <property type="match status" value="1"/>
</dbReference>
<dbReference type="Pfam" id="PF00275">
    <property type="entry name" value="EPSP_synthase"/>
    <property type="match status" value="1"/>
</dbReference>
<dbReference type="SUPFAM" id="SSF55205">
    <property type="entry name" value="EPT/RTPC-like"/>
    <property type="match status" value="1"/>
</dbReference>
<reference key="1">
    <citation type="journal article" date="2002" name="Environ. Microbiol.">
        <title>Complete genome sequence and comparative analysis of the metabolically versatile Pseudomonas putida KT2440.</title>
        <authorList>
            <person name="Nelson K.E."/>
            <person name="Weinel C."/>
            <person name="Paulsen I.T."/>
            <person name="Dodson R.J."/>
            <person name="Hilbert H."/>
            <person name="Martins dos Santos V.A.P."/>
            <person name="Fouts D.E."/>
            <person name="Gill S.R."/>
            <person name="Pop M."/>
            <person name="Holmes M."/>
            <person name="Brinkac L.M."/>
            <person name="Beanan M.J."/>
            <person name="DeBoy R.T."/>
            <person name="Daugherty S.C."/>
            <person name="Kolonay J.F."/>
            <person name="Madupu R."/>
            <person name="Nelson W.C."/>
            <person name="White O."/>
            <person name="Peterson J.D."/>
            <person name="Khouri H.M."/>
            <person name="Hance I."/>
            <person name="Chris Lee P."/>
            <person name="Holtzapple E.K."/>
            <person name="Scanlan D."/>
            <person name="Tran K."/>
            <person name="Moazzez A."/>
            <person name="Utterback T.R."/>
            <person name="Rizzo M."/>
            <person name="Lee K."/>
            <person name="Kosack D."/>
            <person name="Moestl D."/>
            <person name="Wedler H."/>
            <person name="Lauber J."/>
            <person name="Stjepandic D."/>
            <person name="Hoheisel J."/>
            <person name="Straetz M."/>
            <person name="Heim S."/>
            <person name="Kiewitz C."/>
            <person name="Eisen J.A."/>
            <person name="Timmis K.N."/>
            <person name="Duesterhoeft A."/>
            <person name="Tuemmler B."/>
            <person name="Fraser C.M."/>
        </authorList>
    </citation>
    <scope>NUCLEOTIDE SEQUENCE [LARGE SCALE GENOMIC DNA]</scope>
    <source>
        <strain>ATCC 47054 / DSM 6125 / CFBP 8728 / NCIMB 11950 / KT2440</strain>
    </source>
</reference>
<evidence type="ECO:0000255" key="1">
    <source>
        <dbReference type="HAMAP-Rule" id="MF_00111"/>
    </source>
</evidence>
<evidence type="ECO:0007829" key="2">
    <source>
        <dbReference type="PDB" id="6CN1"/>
    </source>
</evidence>
<gene>
    <name evidence="1" type="primary">murA</name>
    <name type="ordered locus">PP_0964</name>
</gene>
<keyword id="KW-0002">3D-structure</keyword>
<keyword id="KW-0131">Cell cycle</keyword>
<keyword id="KW-0132">Cell division</keyword>
<keyword id="KW-0133">Cell shape</keyword>
<keyword id="KW-0961">Cell wall biogenesis/degradation</keyword>
<keyword id="KW-0963">Cytoplasm</keyword>
<keyword id="KW-0573">Peptidoglycan synthesis</keyword>
<keyword id="KW-0670">Pyruvate</keyword>
<keyword id="KW-1185">Reference proteome</keyword>
<keyword id="KW-0808">Transferase</keyword>
<sequence>MDKLIITGGARLDGEIRISGAKNAALPILAATLLADGPVTVGNLPHLHDITTMIELFGRMGIEPVIDEKLSVEIDPRTIKTLVAPYELVKTMRASILVLGPMVARFGEAEVALPGGCAIGSRPVDLHIRGLEAMGAKIEVEGGYIKAKAPEGGLRGAHFFFDTVSVTGTENIMMAAALAKGRSVLQNAAREPEVVDLANFINAMGGNIQGAGTDTITIDGVERLDSANYRVMPDRIETGTYLVAAAVTGGRVKVKDTDPTILEAVLEKLKEAGADINTGEDWIELDMHGKRPKAVNLRTAPYPAFPTDMQAQFISLNAIAEGTGAVIETIFENRFMHVYEMHRMGAQIQVEGNTAIVTGVKALKGAPVMATDLRASASLVLSALVAEGDTLIDRIYHIDRGYECIEEKLQMLGAKIRRVPG</sequence>
<proteinExistence type="evidence at protein level"/>
<feature type="chain" id="PRO_0000178903" description="UDP-N-acetylglucosamine 1-carboxyvinyltransferase">
    <location>
        <begin position="1"/>
        <end position="421"/>
    </location>
</feature>
<feature type="active site" description="Proton donor" evidence="1">
    <location>
        <position position="117"/>
    </location>
</feature>
<feature type="binding site" evidence="1">
    <location>
        <begin position="22"/>
        <end position="23"/>
    </location>
    <ligand>
        <name>phosphoenolpyruvate</name>
        <dbReference type="ChEBI" id="CHEBI:58702"/>
    </ligand>
</feature>
<feature type="binding site" evidence="1">
    <location>
        <position position="93"/>
    </location>
    <ligand>
        <name>UDP-N-acetyl-alpha-D-glucosamine</name>
        <dbReference type="ChEBI" id="CHEBI:57705"/>
    </ligand>
</feature>
<feature type="binding site" evidence="1">
    <location>
        <begin position="122"/>
        <end position="126"/>
    </location>
    <ligand>
        <name>UDP-N-acetyl-alpha-D-glucosamine</name>
        <dbReference type="ChEBI" id="CHEBI:57705"/>
    </ligand>
</feature>
<feature type="binding site" evidence="1">
    <location>
        <position position="308"/>
    </location>
    <ligand>
        <name>UDP-N-acetyl-alpha-D-glucosamine</name>
        <dbReference type="ChEBI" id="CHEBI:57705"/>
    </ligand>
</feature>
<feature type="binding site" evidence="1">
    <location>
        <position position="330"/>
    </location>
    <ligand>
        <name>UDP-N-acetyl-alpha-D-glucosamine</name>
        <dbReference type="ChEBI" id="CHEBI:57705"/>
    </ligand>
</feature>
<feature type="modified residue" description="2-(S-cysteinyl)pyruvic acid O-phosphothioketal" evidence="1">
    <location>
        <position position="117"/>
    </location>
</feature>
<feature type="strand" evidence="2">
    <location>
        <begin position="3"/>
        <end position="7"/>
    </location>
</feature>
<feature type="strand" evidence="2">
    <location>
        <begin position="15"/>
        <end position="17"/>
    </location>
</feature>
<feature type="helix" evidence="2">
    <location>
        <begin position="22"/>
        <end position="30"/>
    </location>
</feature>
<feature type="helix" evidence="2">
    <location>
        <begin position="31"/>
        <end position="34"/>
    </location>
</feature>
<feature type="strand" evidence="2">
    <location>
        <begin position="35"/>
        <end position="37"/>
    </location>
</feature>
<feature type="strand" evidence="2">
    <location>
        <begin position="39"/>
        <end position="43"/>
    </location>
</feature>
<feature type="helix" evidence="2">
    <location>
        <begin position="48"/>
        <end position="59"/>
    </location>
</feature>
<feature type="strand" evidence="2">
    <location>
        <begin position="65"/>
        <end position="68"/>
    </location>
</feature>
<feature type="strand" evidence="2">
    <location>
        <begin position="71"/>
        <end position="74"/>
    </location>
</feature>
<feature type="helix" evidence="2">
    <location>
        <begin position="76"/>
        <end position="78"/>
    </location>
</feature>
<feature type="helix" evidence="2">
    <location>
        <begin position="86"/>
        <end position="89"/>
    </location>
</feature>
<feature type="helix" evidence="2">
    <location>
        <begin position="93"/>
        <end position="98"/>
    </location>
</feature>
<feature type="helix" evidence="2">
    <location>
        <begin position="99"/>
        <end position="106"/>
    </location>
</feature>
<feature type="strand" evidence="2">
    <location>
        <begin position="107"/>
        <end position="112"/>
    </location>
</feature>
<feature type="helix" evidence="2">
    <location>
        <begin position="125"/>
        <end position="132"/>
    </location>
</feature>
<feature type="turn" evidence="2">
    <location>
        <begin position="133"/>
        <end position="135"/>
    </location>
</feature>
<feature type="strand" evidence="2">
    <location>
        <begin position="137"/>
        <end position="141"/>
    </location>
</feature>
<feature type="strand" evidence="2">
    <location>
        <begin position="144"/>
        <end position="148"/>
    </location>
</feature>
<feature type="strand" evidence="2">
    <location>
        <begin position="158"/>
        <end position="160"/>
    </location>
</feature>
<feature type="helix" evidence="2">
    <location>
        <begin position="166"/>
        <end position="178"/>
    </location>
</feature>
<feature type="strand" evidence="2">
    <location>
        <begin position="179"/>
        <end position="187"/>
    </location>
</feature>
<feature type="helix" evidence="2">
    <location>
        <begin position="192"/>
        <end position="203"/>
    </location>
</feature>
<feature type="strand" evidence="2">
    <location>
        <begin position="213"/>
        <end position="219"/>
    </location>
</feature>
<feature type="strand" evidence="2">
    <location>
        <begin position="228"/>
        <end position="230"/>
    </location>
</feature>
<feature type="helix" evidence="2">
    <location>
        <begin position="235"/>
        <end position="247"/>
    </location>
</feature>
<feature type="strand" evidence="2">
    <location>
        <begin position="251"/>
        <end position="256"/>
    </location>
</feature>
<feature type="helix" evidence="2">
    <location>
        <begin position="259"/>
        <end position="262"/>
    </location>
</feature>
<feature type="helix" evidence="2">
    <location>
        <begin position="263"/>
        <end position="271"/>
    </location>
</feature>
<feature type="strand" evidence="2">
    <location>
        <begin position="275"/>
        <end position="279"/>
    </location>
</feature>
<feature type="strand" evidence="2">
    <location>
        <begin position="282"/>
        <end position="286"/>
    </location>
</feature>
<feature type="helix" evidence="2">
    <location>
        <begin position="307"/>
        <end position="309"/>
    </location>
</feature>
<feature type="helix" evidence="2">
    <location>
        <begin position="310"/>
        <end position="317"/>
    </location>
</feature>
<feature type="strand" evidence="2">
    <location>
        <begin position="320"/>
        <end position="327"/>
    </location>
</feature>
<feature type="strand" evidence="2">
    <location>
        <begin position="329"/>
        <end position="331"/>
    </location>
</feature>
<feature type="helix" evidence="2">
    <location>
        <begin position="336"/>
        <end position="342"/>
    </location>
</feature>
<feature type="turn" evidence="2">
    <location>
        <begin position="343"/>
        <end position="345"/>
    </location>
</feature>
<feature type="strand" evidence="2">
    <location>
        <begin position="347"/>
        <end position="351"/>
    </location>
</feature>
<feature type="strand" evidence="2">
    <location>
        <begin position="354"/>
        <end position="358"/>
    </location>
</feature>
<feature type="turn" evidence="2">
    <location>
        <begin position="373"/>
        <end position="376"/>
    </location>
</feature>
<feature type="helix" evidence="2">
    <location>
        <begin position="377"/>
        <end position="382"/>
    </location>
</feature>
<feature type="helix" evidence="2">
    <location>
        <begin position="383"/>
        <end position="385"/>
    </location>
</feature>
<feature type="strand" evidence="2">
    <location>
        <begin position="386"/>
        <end position="393"/>
    </location>
</feature>
<feature type="helix" evidence="2">
    <location>
        <begin position="396"/>
        <end position="401"/>
    </location>
</feature>
<feature type="helix" evidence="2">
    <location>
        <begin position="405"/>
        <end position="409"/>
    </location>
</feature>
<feature type="helix" evidence="2">
    <location>
        <begin position="410"/>
        <end position="412"/>
    </location>
</feature>
<feature type="strand" evidence="2">
    <location>
        <begin position="415"/>
        <end position="419"/>
    </location>
</feature>
<organism>
    <name type="scientific">Pseudomonas putida (strain ATCC 47054 / DSM 6125 / CFBP 8728 / NCIMB 11950 / KT2440)</name>
    <dbReference type="NCBI Taxonomy" id="160488"/>
    <lineage>
        <taxon>Bacteria</taxon>
        <taxon>Pseudomonadati</taxon>
        <taxon>Pseudomonadota</taxon>
        <taxon>Gammaproteobacteria</taxon>
        <taxon>Pseudomonadales</taxon>
        <taxon>Pseudomonadaceae</taxon>
        <taxon>Pseudomonas</taxon>
    </lineage>
</organism>